<proteinExistence type="inferred from homology"/>
<evidence type="ECO:0000255" key="1">
    <source>
        <dbReference type="HAMAP-Rule" id="MF_00366"/>
    </source>
</evidence>
<reference key="1">
    <citation type="journal article" date="2006" name="Nat. Biotechnol.">
        <title>Complete genome sequence of the entomopathogenic and metabolically versatile soil bacterium Pseudomonas entomophila.</title>
        <authorList>
            <person name="Vodovar N."/>
            <person name="Vallenet D."/>
            <person name="Cruveiller S."/>
            <person name="Rouy Z."/>
            <person name="Barbe V."/>
            <person name="Acosta C."/>
            <person name="Cattolico L."/>
            <person name="Jubin C."/>
            <person name="Lajus A."/>
            <person name="Segurens B."/>
            <person name="Vacherie B."/>
            <person name="Wincker P."/>
            <person name="Weissenbach J."/>
            <person name="Lemaitre B."/>
            <person name="Medigue C."/>
            <person name="Boccard F."/>
        </authorList>
    </citation>
    <scope>NUCLEOTIDE SEQUENCE [LARGE SCALE GENOMIC DNA]</scope>
    <source>
        <strain>L48</strain>
    </source>
</reference>
<keyword id="KW-0240">DNA-directed RNA polymerase</keyword>
<keyword id="KW-0548">Nucleotidyltransferase</keyword>
<keyword id="KW-0804">Transcription</keyword>
<keyword id="KW-0808">Transferase</keyword>
<name>RPOZ_PSEE4</name>
<dbReference type="EC" id="2.7.7.6" evidence="1"/>
<dbReference type="EMBL" id="CT573326">
    <property type="protein sequence ID" value="CAK18057.1"/>
    <property type="molecule type" value="Genomic_DNA"/>
</dbReference>
<dbReference type="RefSeq" id="WP_008091595.1">
    <property type="nucleotide sequence ID" value="NC_008027.1"/>
</dbReference>
<dbReference type="SMR" id="Q1I2S9"/>
<dbReference type="STRING" id="384676.PSEEN5446"/>
<dbReference type="GeneID" id="93680459"/>
<dbReference type="KEGG" id="pen:PSEEN5446"/>
<dbReference type="eggNOG" id="COG1758">
    <property type="taxonomic scope" value="Bacteria"/>
</dbReference>
<dbReference type="HOGENOM" id="CLU_125406_5_2_6"/>
<dbReference type="OrthoDB" id="9796300at2"/>
<dbReference type="Proteomes" id="UP000000658">
    <property type="component" value="Chromosome"/>
</dbReference>
<dbReference type="GO" id="GO:0000428">
    <property type="term" value="C:DNA-directed RNA polymerase complex"/>
    <property type="evidence" value="ECO:0007669"/>
    <property type="project" value="UniProtKB-KW"/>
</dbReference>
<dbReference type="GO" id="GO:0003677">
    <property type="term" value="F:DNA binding"/>
    <property type="evidence" value="ECO:0007669"/>
    <property type="project" value="UniProtKB-UniRule"/>
</dbReference>
<dbReference type="GO" id="GO:0003899">
    <property type="term" value="F:DNA-directed RNA polymerase activity"/>
    <property type="evidence" value="ECO:0007669"/>
    <property type="project" value="UniProtKB-UniRule"/>
</dbReference>
<dbReference type="GO" id="GO:0006351">
    <property type="term" value="P:DNA-templated transcription"/>
    <property type="evidence" value="ECO:0007669"/>
    <property type="project" value="UniProtKB-UniRule"/>
</dbReference>
<dbReference type="Gene3D" id="3.90.940.10">
    <property type="match status" value="1"/>
</dbReference>
<dbReference type="HAMAP" id="MF_00366">
    <property type="entry name" value="RNApol_bact_RpoZ"/>
    <property type="match status" value="1"/>
</dbReference>
<dbReference type="InterPro" id="IPR003716">
    <property type="entry name" value="DNA-dir_RNA_pol_omega"/>
</dbReference>
<dbReference type="InterPro" id="IPR006110">
    <property type="entry name" value="Pol_omega/Rpo6/RPB6"/>
</dbReference>
<dbReference type="InterPro" id="IPR036161">
    <property type="entry name" value="RPB6/omega-like_sf"/>
</dbReference>
<dbReference type="NCBIfam" id="TIGR00690">
    <property type="entry name" value="rpoZ"/>
    <property type="match status" value="1"/>
</dbReference>
<dbReference type="PANTHER" id="PTHR34476">
    <property type="entry name" value="DNA-DIRECTED RNA POLYMERASE SUBUNIT OMEGA"/>
    <property type="match status" value="1"/>
</dbReference>
<dbReference type="PANTHER" id="PTHR34476:SF1">
    <property type="entry name" value="DNA-DIRECTED RNA POLYMERASE SUBUNIT OMEGA"/>
    <property type="match status" value="1"/>
</dbReference>
<dbReference type="Pfam" id="PF01192">
    <property type="entry name" value="RNA_pol_Rpb6"/>
    <property type="match status" value="1"/>
</dbReference>
<dbReference type="SMART" id="SM01409">
    <property type="entry name" value="RNA_pol_Rpb6"/>
    <property type="match status" value="1"/>
</dbReference>
<dbReference type="SUPFAM" id="SSF63562">
    <property type="entry name" value="RPB6/omega subunit-like"/>
    <property type="match status" value="1"/>
</dbReference>
<feature type="chain" id="PRO_1000005980" description="DNA-directed RNA polymerase subunit omega">
    <location>
        <begin position="1"/>
        <end position="87"/>
    </location>
</feature>
<protein>
    <recommendedName>
        <fullName evidence="1">DNA-directed RNA polymerase subunit omega</fullName>
        <shortName evidence="1">RNAP omega subunit</shortName>
        <ecNumber evidence="1">2.7.7.6</ecNumber>
    </recommendedName>
    <alternativeName>
        <fullName evidence="1">RNA polymerase omega subunit</fullName>
    </alternativeName>
    <alternativeName>
        <fullName evidence="1">Transcriptase subunit omega</fullName>
    </alternativeName>
</protein>
<accession>Q1I2S9</accession>
<gene>
    <name evidence="1" type="primary">rpoZ</name>
    <name type="ordered locus">PSEEN5446</name>
</gene>
<comment type="function">
    <text evidence="1">Promotes RNA polymerase assembly. Latches the N- and C-terminal regions of the beta' subunit thereby facilitating its interaction with the beta and alpha subunits.</text>
</comment>
<comment type="catalytic activity">
    <reaction evidence="1">
        <text>RNA(n) + a ribonucleoside 5'-triphosphate = RNA(n+1) + diphosphate</text>
        <dbReference type="Rhea" id="RHEA:21248"/>
        <dbReference type="Rhea" id="RHEA-COMP:14527"/>
        <dbReference type="Rhea" id="RHEA-COMP:17342"/>
        <dbReference type="ChEBI" id="CHEBI:33019"/>
        <dbReference type="ChEBI" id="CHEBI:61557"/>
        <dbReference type="ChEBI" id="CHEBI:140395"/>
        <dbReference type="EC" id="2.7.7.6"/>
    </reaction>
</comment>
<comment type="subunit">
    <text evidence="1">The RNAP catalytic core consists of 2 alpha, 1 beta, 1 beta' and 1 omega subunit. When a sigma factor is associated with the core the holoenzyme is formed, which can initiate transcription.</text>
</comment>
<comment type="similarity">
    <text evidence="1">Belongs to the RNA polymerase subunit omega family.</text>
</comment>
<organism>
    <name type="scientific">Pseudomonas entomophila (strain L48)</name>
    <dbReference type="NCBI Taxonomy" id="384676"/>
    <lineage>
        <taxon>Bacteria</taxon>
        <taxon>Pseudomonadati</taxon>
        <taxon>Pseudomonadota</taxon>
        <taxon>Gammaproteobacteria</taxon>
        <taxon>Pseudomonadales</taxon>
        <taxon>Pseudomonadaceae</taxon>
        <taxon>Pseudomonas</taxon>
    </lineage>
</organism>
<sequence length="87" mass="9729">MARVTVEDCLEHVDNRFELVMLSTKRARQLATGGKEPRVAWENDKPTVVALREIAEGIVTPEFIAAEEIVTEDPVFAAFEDENNEAV</sequence>